<accession>Q31W49</accession>
<protein>
    <recommendedName>
        <fullName evidence="1">Ribosome maturation factor RimP</fullName>
    </recommendedName>
</protein>
<name>RIMP_SHIBS</name>
<comment type="function">
    <text evidence="1">Required for maturation of 30S ribosomal subunits.</text>
</comment>
<comment type="subcellular location">
    <subcellularLocation>
        <location evidence="1">Cytoplasm</location>
    </subcellularLocation>
</comment>
<comment type="similarity">
    <text evidence="1">Belongs to the RimP family.</text>
</comment>
<proteinExistence type="inferred from homology"/>
<gene>
    <name evidence="1" type="primary">rimP</name>
    <name type="ordered locus">SBO_3212</name>
</gene>
<sequence length="152" mass="16802">MGLSTLEQKLTEMITAPVEALGFELVGIEFIRGHTSTLRIYIDSEDGINVDDCADVSHQVSAVLDVEDPITVAYNLEVSSPGLDRPLFTAEHYARFVGEEVTLVLRMAVQNRRKWQGVIKAVDGEMITVTVEGKDEVFALSNIQKANLVPHF</sequence>
<organism>
    <name type="scientific">Shigella boydii serotype 4 (strain Sb227)</name>
    <dbReference type="NCBI Taxonomy" id="300268"/>
    <lineage>
        <taxon>Bacteria</taxon>
        <taxon>Pseudomonadati</taxon>
        <taxon>Pseudomonadota</taxon>
        <taxon>Gammaproteobacteria</taxon>
        <taxon>Enterobacterales</taxon>
        <taxon>Enterobacteriaceae</taxon>
        <taxon>Shigella</taxon>
    </lineage>
</organism>
<keyword id="KW-0963">Cytoplasm</keyword>
<keyword id="KW-0690">Ribosome biogenesis</keyword>
<dbReference type="EMBL" id="CP000036">
    <property type="protein sequence ID" value="ABB67709.1"/>
    <property type="molecule type" value="Genomic_DNA"/>
</dbReference>
<dbReference type="SMR" id="Q31W49"/>
<dbReference type="KEGG" id="sbo:SBO_3212"/>
<dbReference type="HOGENOM" id="CLU_070525_1_1_6"/>
<dbReference type="Proteomes" id="UP000007067">
    <property type="component" value="Chromosome"/>
</dbReference>
<dbReference type="GO" id="GO:0005829">
    <property type="term" value="C:cytosol"/>
    <property type="evidence" value="ECO:0007669"/>
    <property type="project" value="TreeGrafter"/>
</dbReference>
<dbReference type="GO" id="GO:0000028">
    <property type="term" value="P:ribosomal small subunit assembly"/>
    <property type="evidence" value="ECO:0007669"/>
    <property type="project" value="TreeGrafter"/>
</dbReference>
<dbReference type="GO" id="GO:0006412">
    <property type="term" value="P:translation"/>
    <property type="evidence" value="ECO:0007669"/>
    <property type="project" value="TreeGrafter"/>
</dbReference>
<dbReference type="CDD" id="cd01734">
    <property type="entry name" value="YlxS_C"/>
    <property type="match status" value="1"/>
</dbReference>
<dbReference type="FunFam" id="2.30.30.180:FF:000001">
    <property type="entry name" value="Ribosome maturation factor RimP"/>
    <property type="match status" value="1"/>
</dbReference>
<dbReference type="FunFam" id="3.30.300.70:FF:000001">
    <property type="entry name" value="Ribosome maturation factor RimP"/>
    <property type="match status" value="1"/>
</dbReference>
<dbReference type="Gene3D" id="2.30.30.180">
    <property type="entry name" value="Ribosome maturation factor RimP, C-terminal domain"/>
    <property type="match status" value="1"/>
</dbReference>
<dbReference type="Gene3D" id="3.30.300.70">
    <property type="entry name" value="RimP-like superfamily, N-terminal"/>
    <property type="match status" value="1"/>
</dbReference>
<dbReference type="HAMAP" id="MF_01077">
    <property type="entry name" value="RimP"/>
    <property type="match status" value="1"/>
</dbReference>
<dbReference type="InterPro" id="IPR003728">
    <property type="entry name" value="Ribosome_maturation_RimP"/>
</dbReference>
<dbReference type="InterPro" id="IPR028998">
    <property type="entry name" value="RimP_C"/>
</dbReference>
<dbReference type="InterPro" id="IPR036847">
    <property type="entry name" value="RimP_C_sf"/>
</dbReference>
<dbReference type="InterPro" id="IPR028989">
    <property type="entry name" value="RimP_N"/>
</dbReference>
<dbReference type="InterPro" id="IPR035956">
    <property type="entry name" value="RimP_N_sf"/>
</dbReference>
<dbReference type="NCBIfam" id="NF000927">
    <property type="entry name" value="PRK00092.1-1"/>
    <property type="match status" value="1"/>
</dbReference>
<dbReference type="PANTHER" id="PTHR33867">
    <property type="entry name" value="RIBOSOME MATURATION FACTOR RIMP"/>
    <property type="match status" value="1"/>
</dbReference>
<dbReference type="PANTHER" id="PTHR33867:SF1">
    <property type="entry name" value="RIBOSOME MATURATION FACTOR RIMP"/>
    <property type="match status" value="1"/>
</dbReference>
<dbReference type="Pfam" id="PF17384">
    <property type="entry name" value="DUF150_C"/>
    <property type="match status" value="1"/>
</dbReference>
<dbReference type="Pfam" id="PF02576">
    <property type="entry name" value="RimP_N"/>
    <property type="match status" value="1"/>
</dbReference>
<dbReference type="SUPFAM" id="SSF74942">
    <property type="entry name" value="YhbC-like, C-terminal domain"/>
    <property type="match status" value="1"/>
</dbReference>
<dbReference type="SUPFAM" id="SSF75420">
    <property type="entry name" value="YhbC-like, N-terminal domain"/>
    <property type="match status" value="1"/>
</dbReference>
<reference key="1">
    <citation type="journal article" date="2005" name="Nucleic Acids Res.">
        <title>Genome dynamics and diversity of Shigella species, the etiologic agents of bacillary dysentery.</title>
        <authorList>
            <person name="Yang F."/>
            <person name="Yang J."/>
            <person name="Zhang X."/>
            <person name="Chen L."/>
            <person name="Jiang Y."/>
            <person name="Yan Y."/>
            <person name="Tang X."/>
            <person name="Wang J."/>
            <person name="Xiong Z."/>
            <person name="Dong J."/>
            <person name="Xue Y."/>
            <person name="Zhu Y."/>
            <person name="Xu X."/>
            <person name="Sun L."/>
            <person name="Chen S."/>
            <person name="Nie H."/>
            <person name="Peng J."/>
            <person name="Xu J."/>
            <person name="Wang Y."/>
            <person name="Yuan Z."/>
            <person name="Wen Y."/>
            <person name="Yao Z."/>
            <person name="Shen Y."/>
            <person name="Qiang B."/>
            <person name="Hou Y."/>
            <person name="Yu J."/>
            <person name="Jin Q."/>
        </authorList>
    </citation>
    <scope>NUCLEOTIDE SEQUENCE [LARGE SCALE GENOMIC DNA]</scope>
    <source>
        <strain>Sb227</strain>
    </source>
</reference>
<evidence type="ECO:0000255" key="1">
    <source>
        <dbReference type="HAMAP-Rule" id="MF_01077"/>
    </source>
</evidence>
<feature type="chain" id="PRO_0000229276" description="Ribosome maturation factor RimP">
    <location>
        <begin position="1"/>
        <end position="152"/>
    </location>
</feature>